<evidence type="ECO:0000255" key="1">
    <source>
        <dbReference type="HAMAP-Rule" id="MF_00110"/>
    </source>
</evidence>
<protein>
    <recommendedName>
        <fullName evidence="1">3-dehydroquinate synthase</fullName>
        <shortName evidence="1">DHQS</shortName>
        <ecNumber evidence="1">4.2.3.4</ecNumber>
    </recommendedName>
</protein>
<dbReference type="EC" id="4.2.3.4" evidence="1"/>
<dbReference type="EMBL" id="CP000552">
    <property type="protein sequence ID" value="ABM71964.1"/>
    <property type="molecule type" value="Genomic_DNA"/>
</dbReference>
<dbReference type="RefSeq" id="WP_011820069.1">
    <property type="nucleotide sequence ID" value="NC_008817.1"/>
</dbReference>
<dbReference type="SMR" id="A2BW03"/>
<dbReference type="STRING" id="167542.P9515_07551"/>
<dbReference type="GeneID" id="60201524"/>
<dbReference type="KEGG" id="pmc:P9515_07551"/>
<dbReference type="eggNOG" id="COG0337">
    <property type="taxonomic scope" value="Bacteria"/>
</dbReference>
<dbReference type="HOGENOM" id="CLU_001201_0_2_3"/>
<dbReference type="OrthoDB" id="9806583at2"/>
<dbReference type="UniPathway" id="UPA00053">
    <property type="reaction ID" value="UER00085"/>
</dbReference>
<dbReference type="Proteomes" id="UP000001589">
    <property type="component" value="Chromosome"/>
</dbReference>
<dbReference type="GO" id="GO:0005737">
    <property type="term" value="C:cytoplasm"/>
    <property type="evidence" value="ECO:0007669"/>
    <property type="project" value="UniProtKB-SubCell"/>
</dbReference>
<dbReference type="GO" id="GO:0003856">
    <property type="term" value="F:3-dehydroquinate synthase activity"/>
    <property type="evidence" value="ECO:0007669"/>
    <property type="project" value="UniProtKB-UniRule"/>
</dbReference>
<dbReference type="GO" id="GO:0046872">
    <property type="term" value="F:metal ion binding"/>
    <property type="evidence" value="ECO:0007669"/>
    <property type="project" value="UniProtKB-KW"/>
</dbReference>
<dbReference type="GO" id="GO:0000166">
    <property type="term" value="F:nucleotide binding"/>
    <property type="evidence" value="ECO:0007669"/>
    <property type="project" value="UniProtKB-KW"/>
</dbReference>
<dbReference type="GO" id="GO:0008652">
    <property type="term" value="P:amino acid biosynthetic process"/>
    <property type="evidence" value="ECO:0007669"/>
    <property type="project" value="UniProtKB-KW"/>
</dbReference>
<dbReference type="GO" id="GO:0009073">
    <property type="term" value="P:aromatic amino acid family biosynthetic process"/>
    <property type="evidence" value="ECO:0007669"/>
    <property type="project" value="UniProtKB-KW"/>
</dbReference>
<dbReference type="GO" id="GO:0009423">
    <property type="term" value="P:chorismate biosynthetic process"/>
    <property type="evidence" value="ECO:0007669"/>
    <property type="project" value="UniProtKB-UniRule"/>
</dbReference>
<dbReference type="CDD" id="cd08195">
    <property type="entry name" value="DHQS"/>
    <property type="match status" value="1"/>
</dbReference>
<dbReference type="FunFam" id="3.40.50.1970:FF:000001">
    <property type="entry name" value="3-dehydroquinate synthase"/>
    <property type="match status" value="1"/>
</dbReference>
<dbReference type="Gene3D" id="3.40.50.1970">
    <property type="match status" value="1"/>
</dbReference>
<dbReference type="Gene3D" id="1.20.1090.10">
    <property type="entry name" value="Dehydroquinate synthase-like - alpha domain"/>
    <property type="match status" value="1"/>
</dbReference>
<dbReference type="HAMAP" id="MF_00110">
    <property type="entry name" value="DHQ_synthase"/>
    <property type="match status" value="1"/>
</dbReference>
<dbReference type="InterPro" id="IPR050071">
    <property type="entry name" value="Dehydroquinate_synthase"/>
</dbReference>
<dbReference type="InterPro" id="IPR016037">
    <property type="entry name" value="DHQ_synth_AroB"/>
</dbReference>
<dbReference type="InterPro" id="IPR030963">
    <property type="entry name" value="DHQ_synth_fam"/>
</dbReference>
<dbReference type="InterPro" id="IPR030960">
    <property type="entry name" value="DHQS/DOIS_N"/>
</dbReference>
<dbReference type="InterPro" id="IPR056179">
    <property type="entry name" value="DHQS_C"/>
</dbReference>
<dbReference type="NCBIfam" id="TIGR01357">
    <property type="entry name" value="aroB"/>
    <property type="match status" value="1"/>
</dbReference>
<dbReference type="PANTHER" id="PTHR43622">
    <property type="entry name" value="3-DEHYDROQUINATE SYNTHASE"/>
    <property type="match status" value="1"/>
</dbReference>
<dbReference type="PANTHER" id="PTHR43622:SF7">
    <property type="entry name" value="3-DEHYDROQUINATE SYNTHASE, CHLOROPLASTIC"/>
    <property type="match status" value="1"/>
</dbReference>
<dbReference type="Pfam" id="PF01761">
    <property type="entry name" value="DHQ_synthase"/>
    <property type="match status" value="1"/>
</dbReference>
<dbReference type="Pfam" id="PF24621">
    <property type="entry name" value="DHQS_C"/>
    <property type="match status" value="1"/>
</dbReference>
<dbReference type="PIRSF" id="PIRSF001455">
    <property type="entry name" value="DHQ_synth"/>
    <property type="match status" value="1"/>
</dbReference>
<dbReference type="SUPFAM" id="SSF56796">
    <property type="entry name" value="Dehydroquinate synthase-like"/>
    <property type="match status" value="1"/>
</dbReference>
<name>AROB_PROM5</name>
<gene>
    <name evidence="1" type="primary">aroB</name>
    <name type="ordered locus">P9515_07551</name>
</gene>
<accession>A2BW03</accession>
<feature type="chain" id="PRO_1000094565" description="3-dehydroquinate synthase">
    <location>
        <begin position="1"/>
        <end position="363"/>
    </location>
</feature>
<feature type="binding site" evidence="1">
    <location>
        <begin position="134"/>
        <end position="135"/>
    </location>
    <ligand>
        <name>NAD(+)</name>
        <dbReference type="ChEBI" id="CHEBI:57540"/>
    </ligand>
</feature>
<feature type="binding site" evidence="1">
    <location>
        <position position="147"/>
    </location>
    <ligand>
        <name>NAD(+)</name>
        <dbReference type="ChEBI" id="CHEBI:57540"/>
    </ligand>
</feature>
<feature type="binding site" evidence="1">
    <location>
        <position position="156"/>
    </location>
    <ligand>
        <name>NAD(+)</name>
        <dbReference type="ChEBI" id="CHEBI:57540"/>
    </ligand>
</feature>
<feature type="binding site" evidence="1">
    <location>
        <begin position="174"/>
        <end position="177"/>
    </location>
    <ligand>
        <name>NAD(+)</name>
        <dbReference type="ChEBI" id="CHEBI:57540"/>
    </ligand>
</feature>
<feature type="binding site" evidence="1">
    <location>
        <position position="189"/>
    </location>
    <ligand>
        <name>Zn(2+)</name>
        <dbReference type="ChEBI" id="CHEBI:29105"/>
    </ligand>
</feature>
<feature type="binding site" evidence="1">
    <location>
        <position position="254"/>
    </location>
    <ligand>
        <name>Zn(2+)</name>
        <dbReference type="ChEBI" id="CHEBI:29105"/>
    </ligand>
</feature>
<feature type="binding site" evidence="1">
    <location>
        <position position="271"/>
    </location>
    <ligand>
        <name>Zn(2+)</name>
        <dbReference type="ChEBI" id="CHEBI:29105"/>
    </ligand>
</feature>
<proteinExistence type="inferred from homology"/>
<keyword id="KW-0028">Amino-acid biosynthesis</keyword>
<keyword id="KW-0057">Aromatic amino acid biosynthesis</keyword>
<keyword id="KW-0170">Cobalt</keyword>
<keyword id="KW-0963">Cytoplasm</keyword>
<keyword id="KW-0456">Lyase</keyword>
<keyword id="KW-0479">Metal-binding</keyword>
<keyword id="KW-0520">NAD</keyword>
<keyword id="KW-0547">Nucleotide-binding</keyword>
<keyword id="KW-0862">Zinc</keyword>
<reference key="1">
    <citation type="journal article" date="2007" name="PLoS Genet.">
        <title>Patterns and implications of gene gain and loss in the evolution of Prochlorococcus.</title>
        <authorList>
            <person name="Kettler G.C."/>
            <person name="Martiny A.C."/>
            <person name="Huang K."/>
            <person name="Zucker J."/>
            <person name="Coleman M.L."/>
            <person name="Rodrigue S."/>
            <person name="Chen F."/>
            <person name="Lapidus A."/>
            <person name="Ferriera S."/>
            <person name="Johnson J."/>
            <person name="Steglich C."/>
            <person name="Church G.M."/>
            <person name="Richardson P."/>
            <person name="Chisholm S.W."/>
        </authorList>
    </citation>
    <scope>NUCLEOTIDE SEQUENCE [LARGE SCALE GENOMIC DNA]</scope>
    <source>
        <strain>MIT 9515</strain>
    </source>
</reference>
<organism>
    <name type="scientific">Prochlorococcus marinus (strain MIT 9515)</name>
    <dbReference type="NCBI Taxonomy" id="167542"/>
    <lineage>
        <taxon>Bacteria</taxon>
        <taxon>Bacillati</taxon>
        <taxon>Cyanobacteriota</taxon>
        <taxon>Cyanophyceae</taxon>
        <taxon>Synechococcales</taxon>
        <taxon>Prochlorococcaceae</taxon>
        <taxon>Prochlorococcus</taxon>
    </lineage>
</organism>
<comment type="function">
    <text evidence="1">Catalyzes the conversion of 3-deoxy-D-arabino-heptulosonate 7-phosphate (DAHP) to dehydroquinate (DHQ).</text>
</comment>
<comment type="catalytic activity">
    <reaction evidence="1">
        <text>7-phospho-2-dehydro-3-deoxy-D-arabino-heptonate = 3-dehydroquinate + phosphate</text>
        <dbReference type="Rhea" id="RHEA:21968"/>
        <dbReference type="ChEBI" id="CHEBI:32364"/>
        <dbReference type="ChEBI" id="CHEBI:43474"/>
        <dbReference type="ChEBI" id="CHEBI:58394"/>
        <dbReference type="EC" id="4.2.3.4"/>
    </reaction>
</comment>
<comment type="cofactor">
    <cofactor evidence="1">
        <name>Co(2+)</name>
        <dbReference type="ChEBI" id="CHEBI:48828"/>
    </cofactor>
    <cofactor evidence="1">
        <name>Zn(2+)</name>
        <dbReference type="ChEBI" id="CHEBI:29105"/>
    </cofactor>
    <text evidence="1">Binds 1 divalent metal cation per subunit. Can use either Co(2+) or Zn(2+).</text>
</comment>
<comment type="cofactor">
    <cofactor evidence="1">
        <name>NAD(+)</name>
        <dbReference type="ChEBI" id="CHEBI:57540"/>
    </cofactor>
</comment>
<comment type="pathway">
    <text evidence="1">Metabolic intermediate biosynthesis; chorismate biosynthesis; chorismate from D-erythrose 4-phosphate and phosphoenolpyruvate: step 2/7.</text>
</comment>
<comment type="subcellular location">
    <subcellularLocation>
        <location evidence="1">Cytoplasm</location>
    </subcellularLocation>
</comment>
<comment type="similarity">
    <text evidence="1">Belongs to the sugar phosphate cyclases superfamily. Dehydroquinate synthase family.</text>
</comment>
<sequence>MNKNKIIVPLSNNSYEVTIRQGIINSIGKELTQIGINNNRKILIVSNKEISNLFGSKLLNDLKKYNFSAEIFNIKAGESYKNLASLREIYDAAFEFGLDRNALLIALGGGIVGDVTGFAAATWLRGIDYIQIPTTLLSMVDSSVGGKTAVNHPKGKNLIGAFYQPKAVFIDPETLKTLPIREFKAGMAEVIKYGVIKDKELFEYLEIDKNREKILNLDNESLIKIINKSIRTKSYIVSKDEKENGIRAILNYGHSFGHVIENLCGYGEYLHGEAISIGMKIAGDISTEKNLWLKEDSLRQDKLIESYGLPTQTPKIKKHDVITILMGDKKVRDGKMRFILPKGIGEVDIFNDIKESQFLKYFD</sequence>